<protein>
    <recommendedName>
        <fullName>HTH-type transcriptional regulator McbR</fullName>
    </recommendedName>
</protein>
<name>MCBR_ECOLI</name>
<sequence>MPGTGKMKHVSLTLQVENDLKHQLSIGALKPGARLITKNLAEQLGMSITPVREALLRLVSVNALSVAPAQAFTVPEVGKRQLDEINRIRYELELMAVALAVENLTPQDLAELQELLEKLQQAQEKGDMEQIINVNRLFRLAIYHRSNMPILCEMIEQLWVRMGPGLHYLYEAINPAELREHIENYHLLLAALKAKDKEGCRHCLAEIMQQNIAILYQQYNR</sequence>
<evidence type="ECO:0000255" key="1">
    <source>
        <dbReference type="PROSITE-ProRule" id="PRU00307"/>
    </source>
</evidence>
<evidence type="ECO:0000269" key="2">
    <source>
    </source>
</evidence>
<dbReference type="EMBL" id="U00096">
    <property type="protein sequence ID" value="AAC74532.2"/>
    <property type="molecule type" value="Genomic_DNA"/>
</dbReference>
<dbReference type="EMBL" id="AP009048">
    <property type="protein sequence ID" value="BAA15082.1"/>
    <property type="molecule type" value="Genomic_DNA"/>
</dbReference>
<dbReference type="PIR" id="E64897">
    <property type="entry name" value="E64897"/>
</dbReference>
<dbReference type="RefSeq" id="NP_415967.2">
    <property type="nucleotide sequence ID" value="NC_000913.3"/>
</dbReference>
<dbReference type="RefSeq" id="WP_001300742.1">
    <property type="nucleotide sequence ID" value="NZ_STEB01000043.1"/>
</dbReference>
<dbReference type="SMR" id="P76114"/>
<dbReference type="BioGRID" id="4260196">
    <property type="interactions" value="103"/>
</dbReference>
<dbReference type="BioGRID" id="850375">
    <property type="interactions" value="2"/>
</dbReference>
<dbReference type="DIP" id="DIP-12749N"/>
<dbReference type="FunCoup" id="P76114">
    <property type="interactions" value="55"/>
</dbReference>
<dbReference type="IntAct" id="P76114">
    <property type="interactions" value="11"/>
</dbReference>
<dbReference type="STRING" id="511145.b1450"/>
<dbReference type="jPOST" id="P76114"/>
<dbReference type="PaxDb" id="511145-b1450"/>
<dbReference type="EnsemblBacteria" id="AAC74532">
    <property type="protein sequence ID" value="AAC74532"/>
    <property type="gene ID" value="b1450"/>
</dbReference>
<dbReference type="GeneID" id="946014"/>
<dbReference type="KEGG" id="ecj:JW1445"/>
<dbReference type="KEGG" id="eco:b1450"/>
<dbReference type="KEGG" id="ecoc:C3026_08435"/>
<dbReference type="PATRIC" id="fig|1411691.4.peg.818"/>
<dbReference type="EchoBASE" id="EB3535"/>
<dbReference type="eggNOG" id="COG1802">
    <property type="taxonomic scope" value="Bacteria"/>
</dbReference>
<dbReference type="HOGENOM" id="CLU_017584_5_4_6"/>
<dbReference type="InParanoid" id="P76114"/>
<dbReference type="OMA" id="LWHNKEF"/>
<dbReference type="OrthoDB" id="7003764at2"/>
<dbReference type="PhylomeDB" id="P76114"/>
<dbReference type="BioCyc" id="EcoCyc:G6761-MONOMER"/>
<dbReference type="PRO" id="PR:P76114"/>
<dbReference type="Proteomes" id="UP000000625">
    <property type="component" value="Chromosome"/>
</dbReference>
<dbReference type="GO" id="GO:0003677">
    <property type="term" value="F:DNA binding"/>
    <property type="evidence" value="ECO:0007669"/>
    <property type="project" value="UniProtKB-KW"/>
</dbReference>
<dbReference type="GO" id="GO:0003700">
    <property type="term" value="F:DNA-binding transcription factor activity"/>
    <property type="evidence" value="ECO:0000314"/>
    <property type="project" value="EcoCyc"/>
</dbReference>
<dbReference type="GO" id="GO:0045892">
    <property type="term" value="P:negative regulation of DNA-templated transcription"/>
    <property type="evidence" value="ECO:0000314"/>
    <property type="project" value="EcoCyc"/>
</dbReference>
<dbReference type="FunFam" id="1.20.120.530:FF:000012">
    <property type="entry name" value="HTH-type transcriptional regulator McbR"/>
    <property type="match status" value="1"/>
</dbReference>
<dbReference type="Gene3D" id="1.20.120.530">
    <property type="entry name" value="GntR ligand-binding domain-like"/>
    <property type="match status" value="1"/>
</dbReference>
<dbReference type="Gene3D" id="1.10.10.10">
    <property type="entry name" value="Winged helix-like DNA-binding domain superfamily/Winged helix DNA-binding domain"/>
    <property type="match status" value="1"/>
</dbReference>
<dbReference type="InterPro" id="IPR011711">
    <property type="entry name" value="GntR_C"/>
</dbReference>
<dbReference type="InterPro" id="IPR008920">
    <property type="entry name" value="TF_FadR/GntR_C"/>
</dbReference>
<dbReference type="InterPro" id="IPR000524">
    <property type="entry name" value="Tscrpt_reg_HTH_GntR"/>
</dbReference>
<dbReference type="InterPro" id="IPR036388">
    <property type="entry name" value="WH-like_DNA-bd_sf"/>
</dbReference>
<dbReference type="InterPro" id="IPR036390">
    <property type="entry name" value="WH_DNA-bd_sf"/>
</dbReference>
<dbReference type="NCBIfam" id="NF008504">
    <property type="entry name" value="PRK11414.1"/>
    <property type="match status" value="1"/>
</dbReference>
<dbReference type="PANTHER" id="PTHR43537:SF39">
    <property type="entry name" value="HTH-TYPE TRANSCRIPTIONAL REGULATOR MCBR"/>
    <property type="match status" value="1"/>
</dbReference>
<dbReference type="PANTHER" id="PTHR43537">
    <property type="entry name" value="TRANSCRIPTIONAL REGULATOR, GNTR FAMILY"/>
    <property type="match status" value="1"/>
</dbReference>
<dbReference type="Pfam" id="PF07729">
    <property type="entry name" value="FCD"/>
    <property type="match status" value="1"/>
</dbReference>
<dbReference type="Pfam" id="PF00392">
    <property type="entry name" value="GntR"/>
    <property type="match status" value="1"/>
</dbReference>
<dbReference type="SMART" id="SM00895">
    <property type="entry name" value="FCD"/>
    <property type="match status" value="1"/>
</dbReference>
<dbReference type="SMART" id="SM00345">
    <property type="entry name" value="HTH_GNTR"/>
    <property type="match status" value="1"/>
</dbReference>
<dbReference type="SUPFAM" id="SSF48008">
    <property type="entry name" value="GntR ligand-binding domain-like"/>
    <property type="match status" value="1"/>
</dbReference>
<dbReference type="SUPFAM" id="SSF46785">
    <property type="entry name" value="Winged helix' DNA-binding domain"/>
    <property type="match status" value="1"/>
</dbReference>
<dbReference type="PROSITE" id="PS50949">
    <property type="entry name" value="HTH_GNTR"/>
    <property type="match status" value="1"/>
</dbReference>
<reference key="1">
    <citation type="journal article" date="1996" name="DNA Res.">
        <title>A 570-kb DNA sequence of the Escherichia coli K-12 genome corresponding to the 28.0-40.1 min region on the linkage map.</title>
        <authorList>
            <person name="Aiba H."/>
            <person name="Baba T."/>
            <person name="Fujita K."/>
            <person name="Hayashi K."/>
            <person name="Inada T."/>
            <person name="Isono K."/>
            <person name="Itoh T."/>
            <person name="Kasai H."/>
            <person name="Kashimoto K."/>
            <person name="Kimura S."/>
            <person name="Kitakawa M."/>
            <person name="Kitagawa M."/>
            <person name="Makino K."/>
            <person name="Miki T."/>
            <person name="Mizobuchi K."/>
            <person name="Mori H."/>
            <person name="Mori T."/>
            <person name="Motomura K."/>
            <person name="Nakade S."/>
            <person name="Nakamura Y."/>
            <person name="Nashimoto H."/>
            <person name="Nishio Y."/>
            <person name="Oshima T."/>
            <person name="Saito N."/>
            <person name="Sampei G."/>
            <person name="Seki Y."/>
            <person name="Sivasundaram S."/>
            <person name="Tagami H."/>
            <person name="Takeda J."/>
            <person name="Takemoto K."/>
            <person name="Takeuchi Y."/>
            <person name="Wada C."/>
            <person name="Yamamoto Y."/>
            <person name="Horiuchi T."/>
        </authorList>
    </citation>
    <scope>NUCLEOTIDE SEQUENCE [LARGE SCALE GENOMIC DNA]</scope>
    <source>
        <strain>K12 / W3110 / ATCC 27325 / DSM 5911</strain>
    </source>
</reference>
<reference key="2">
    <citation type="journal article" date="1997" name="Science">
        <title>The complete genome sequence of Escherichia coli K-12.</title>
        <authorList>
            <person name="Blattner F.R."/>
            <person name="Plunkett G. III"/>
            <person name="Bloch C.A."/>
            <person name="Perna N.T."/>
            <person name="Burland V."/>
            <person name="Riley M."/>
            <person name="Collado-Vides J."/>
            <person name="Glasner J.D."/>
            <person name="Rode C.K."/>
            <person name="Mayhew G.F."/>
            <person name="Gregor J."/>
            <person name="Davis N.W."/>
            <person name="Kirkpatrick H.A."/>
            <person name="Goeden M.A."/>
            <person name="Rose D.J."/>
            <person name="Mau B."/>
            <person name="Shao Y."/>
        </authorList>
    </citation>
    <scope>NUCLEOTIDE SEQUENCE [LARGE SCALE GENOMIC DNA]</scope>
    <source>
        <strain>K12 / MG1655 / ATCC 47076</strain>
    </source>
</reference>
<reference key="3">
    <citation type="journal article" date="2006" name="Mol. Syst. Biol.">
        <title>Highly accurate genome sequences of Escherichia coli K-12 strains MG1655 and W3110.</title>
        <authorList>
            <person name="Hayashi K."/>
            <person name="Morooka N."/>
            <person name="Yamamoto Y."/>
            <person name="Fujita K."/>
            <person name="Isono K."/>
            <person name="Choi S."/>
            <person name="Ohtsubo E."/>
            <person name="Baba T."/>
            <person name="Wanner B.L."/>
            <person name="Mori H."/>
            <person name="Horiuchi T."/>
        </authorList>
    </citation>
    <scope>NUCLEOTIDE SEQUENCE [LARGE SCALE GENOMIC DNA]</scope>
    <source>
        <strain>K12 / W3110 / ATCC 27325 / DSM 5911</strain>
    </source>
</reference>
<reference key="4">
    <citation type="journal article" date="2008" name="ISME J.">
        <title>Escherichia coli transcription factor YncC (McbR) regulates colanic acid and biofilm formation by repressing expression of periplasmic protein YbiM (McbA).</title>
        <authorList>
            <person name="Zhang X.-S."/>
            <person name="Garcia-Contreras R."/>
            <person name="Wood T.K."/>
        </authorList>
    </citation>
    <scope>FUNCTION IN BIOFILM FORMATION</scope>
    <scope>INDUCTION</scope>
    <scope>DISRUPTION PHENOTYPE</scope>
    <source>
        <strain>K12 / BW25113</strain>
    </source>
</reference>
<gene>
    <name type="primary">mcbR</name>
    <name type="synonym">yncC</name>
    <name type="ordered locus">b1450</name>
    <name type="ordered locus">JW1445</name>
</gene>
<feature type="chain" id="PRO_0000050686" description="HTH-type transcriptional regulator McbR">
    <location>
        <begin position="1"/>
        <end position="221"/>
    </location>
</feature>
<feature type="domain" description="HTH gntR-type" evidence="1">
    <location>
        <begin position="10"/>
        <end position="77"/>
    </location>
</feature>
<feature type="DNA-binding region" description="H-T-H motif" evidence="1">
    <location>
        <begin position="37"/>
        <end position="56"/>
    </location>
</feature>
<organism>
    <name type="scientific">Escherichia coli (strain K12)</name>
    <dbReference type="NCBI Taxonomy" id="83333"/>
    <lineage>
        <taxon>Bacteria</taxon>
        <taxon>Pseudomonadati</taxon>
        <taxon>Pseudomonadota</taxon>
        <taxon>Gammaproteobacteria</taxon>
        <taxon>Enterobacterales</taxon>
        <taxon>Enterobacteriaceae</taxon>
        <taxon>Escherichia</taxon>
    </lineage>
</organism>
<keyword id="KW-0238">DNA-binding</keyword>
<keyword id="KW-1185">Reference proteome</keyword>
<keyword id="KW-0678">Repressor</keyword>
<keyword id="KW-0804">Transcription</keyword>
<keyword id="KW-0805">Transcription regulation</keyword>
<comment type="function">
    <text evidence="2">Important for biofilm formation. Represses expression of McbA by binding to its promoter region, which prevents colanic acid overproduction and mucoidy.</text>
</comment>
<comment type="interaction">
    <interactant intactId="EBI-560824">
        <id>P76114</id>
    </interactant>
    <interactant intactId="EBI-542200">
        <id>P60438</id>
        <label>rplC</label>
    </interactant>
    <organismsDiffer>false</organismsDiffer>
    <experiments>2</experiments>
</comment>
<comment type="induction">
    <text evidence="2">Induced by LsrR, LsrK, MqsR and TqsA. Repressed by LuxS and YgiV.</text>
</comment>
<comment type="disruption phenotype">
    <text evidence="2">Disruption of this gene induces 30 genes and represses 10 genes more than fourfold. It decreases biofilm formation, increases extracellular indole, leads to colanic acid overproduction and elicits mucoidy.</text>
</comment>
<proteinExistence type="evidence at protein level"/>
<accession>P76114</accession>
<accession>P77347</accession>